<protein>
    <recommendedName>
        <fullName>Protein yippee-like PJ691.02</fullName>
    </recommendedName>
</protein>
<comment type="similarity">
    <text evidence="2">Belongs to the yippee family.</text>
</comment>
<proteinExistence type="inferred from homology"/>
<sequence length="131" mass="15334">MGRYYPVHLKSRCYVCAKCKTHLAFKGHLLSHDYRGKNGPACLFKRVENVIEMEPKTEQMSTGRFIVRHIHCCRCHTYIGWKYVSSYEPSQKFKDGHYILEMQDAVLQRDDPEPDDCFIHPPITFLSSSFS</sequence>
<feature type="chain" id="PRO_0000212409" description="Protein yippee-like PJ691.02">
    <location>
        <begin position="1"/>
        <end position="131"/>
    </location>
</feature>
<feature type="domain" description="Yippee" evidence="1">
    <location>
        <begin position="12"/>
        <end position="109"/>
    </location>
</feature>
<feature type="binding site" evidence="1">
    <location>
        <position position="16"/>
    </location>
    <ligand>
        <name>Zn(2+)</name>
        <dbReference type="ChEBI" id="CHEBI:29105"/>
    </ligand>
</feature>
<feature type="binding site" evidence="1">
    <location>
        <position position="19"/>
    </location>
    <ligand>
        <name>Zn(2+)</name>
        <dbReference type="ChEBI" id="CHEBI:29105"/>
    </ligand>
</feature>
<feature type="binding site" evidence="1">
    <location>
        <position position="72"/>
    </location>
    <ligand>
        <name>Zn(2+)</name>
        <dbReference type="ChEBI" id="CHEBI:29105"/>
    </ligand>
</feature>
<feature type="binding site" evidence="1">
    <location>
        <position position="75"/>
    </location>
    <ligand>
        <name>Zn(2+)</name>
        <dbReference type="ChEBI" id="CHEBI:29105"/>
    </ligand>
</feature>
<evidence type="ECO:0000255" key="1">
    <source>
        <dbReference type="PROSITE-ProRule" id="PRU01128"/>
    </source>
</evidence>
<evidence type="ECO:0000305" key="2"/>
<accession>Q9URW3</accession>
<name>YIPL_SCHPO</name>
<dbReference type="EMBL" id="CU329670">
    <property type="protein sequence ID" value="CAB62089.1"/>
    <property type="molecule type" value="Genomic_DNA"/>
</dbReference>
<dbReference type="PIR" id="T50292">
    <property type="entry name" value="T50292"/>
</dbReference>
<dbReference type="RefSeq" id="NP_594895.1">
    <property type="nucleotide sequence ID" value="NM_001020324.2"/>
</dbReference>
<dbReference type="SMR" id="Q9URW3"/>
<dbReference type="BioGRID" id="279740">
    <property type="interactions" value="10"/>
</dbReference>
<dbReference type="FunCoup" id="Q9URW3">
    <property type="interactions" value="395"/>
</dbReference>
<dbReference type="STRING" id="284812.Q9URW3"/>
<dbReference type="iPTMnet" id="Q9URW3"/>
<dbReference type="PaxDb" id="4896-SPAPJ691.02.1"/>
<dbReference type="EnsemblFungi" id="SPAPJ691.02.1">
    <property type="protein sequence ID" value="SPAPJ691.02.1:pep"/>
    <property type="gene ID" value="SPAPJ691.02"/>
</dbReference>
<dbReference type="KEGG" id="spo:2543316"/>
<dbReference type="PomBase" id="SPAPJ691.02"/>
<dbReference type="VEuPathDB" id="FungiDB:SPAPJ691.02"/>
<dbReference type="eggNOG" id="KOG3399">
    <property type="taxonomic scope" value="Eukaryota"/>
</dbReference>
<dbReference type="HOGENOM" id="CLU_043857_3_2_1"/>
<dbReference type="InParanoid" id="Q9URW3"/>
<dbReference type="OMA" id="HLAFKGH"/>
<dbReference type="PhylomeDB" id="Q9URW3"/>
<dbReference type="PRO" id="PR:Q9URW3"/>
<dbReference type="Proteomes" id="UP000002485">
    <property type="component" value="Chromosome I"/>
</dbReference>
<dbReference type="GO" id="GO:0005634">
    <property type="term" value="C:nucleus"/>
    <property type="evidence" value="ECO:0000255"/>
    <property type="project" value="PomBase"/>
</dbReference>
<dbReference type="GO" id="GO:0000151">
    <property type="term" value="C:ubiquitin ligase complex"/>
    <property type="evidence" value="ECO:0000318"/>
    <property type="project" value="GO_Central"/>
</dbReference>
<dbReference type="GO" id="GO:0008270">
    <property type="term" value="F:zinc ion binding"/>
    <property type="evidence" value="ECO:0000255"/>
    <property type="project" value="PomBase"/>
</dbReference>
<dbReference type="InterPro" id="IPR034751">
    <property type="entry name" value="Yippee"/>
</dbReference>
<dbReference type="InterPro" id="IPR004910">
    <property type="entry name" value="Yippee/Mis18/Cereblon"/>
</dbReference>
<dbReference type="InterPro" id="IPR039058">
    <property type="entry name" value="Yippee_fam"/>
</dbReference>
<dbReference type="PANTHER" id="PTHR13848">
    <property type="entry name" value="PROTEIN YIPPEE-LIKE CG15309-RELATED"/>
    <property type="match status" value="1"/>
</dbReference>
<dbReference type="Pfam" id="PF03226">
    <property type="entry name" value="Yippee-Mis18"/>
    <property type="match status" value="1"/>
</dbReference>
<dbReference type="PROSITE" id="PS51792">
    <property type="entry name" value="YIPPEE"/>
    <property type="match status" value="1"/>
</dbReference>
<reference key="1">
    <citation type="journal article" date="2002" name="Nature">
        <title>The genome sequence of Schizosaccharomyces pombe.</title>
        <authorList>
            <person name="Wood V."/>
            <person name="Gwilliam R."/>
            <person name="Rajandream M.A."/>
            <person name="Lyne M.H."/>
            <person name="Lyne R."/>
            <person name="Stewart A."/>
            <person name="Sgouros J.G."/>
            <person name="Peat N."/>
            <person name="Hayles J."/>
            <person name="Baker S.G."/>
            <person name="Basham D."/>
            <person name="Bowman S."/>
            <person name="Brooks K."/>
            <person name="Brown D."/>
            <person name="Brown S."/>
            <person name="Chillingworth T."/>
            <person name="Churcher C.M."/>
            <person name="Collins M."/>
            <person name="Connor R."/>
            <person name="Cronin A."/>
            <person name="Davis P."/>
            <person name="Feltwell T."/>
            <person name="Fraser A."/>
            <person name="Gentles S."/>
            <person name="Goble A."/>
            <person name="Hamlin N."/>
            <person name="Harris D.E."/>
            <person name="Hidalgo J."/>
            <person name="Hodgson G."/>
            <person name="Holroyd S."/>
            <person name="Hornsby T."/>
            <person name="Howarth S."/>
            <person name="Huckle E.J."/>
            <person name="Hunt S."/>
            <person name="Jagels K."/>
            <person name="James K.D."/>
            <person name="Jones L."/>
            <person name="Jones M."/>
            <person name="Leather S."/>
            <person name="McDonald S."/>
            <person name="McLean J."/>
            <person name="Mooney P."/>
            <person name="Moule S."/>
            <person name="Mungall K.L."/>
            <person name="Murphy L.D."/>
            <person name="Niblett D."/>
            <person name="Odell C."/>
            <person name="Oliver K."/>
            <person name="O'Neil S."/>
            <person name="Pearson D."/>
            <person name="Quail M.A."/>
            <person name="Rabbinowitsch E."/>
            <person name="Rutherford K.M."/>
            <person name="Rutter S."/>
            <person name="Saunders D."/>
            <person name="Seeger K."/>
            <person name="Sharp S."/>
            <person name="Skelton J."/>
            <person name="Simmonds M.N."/>
            <person name="Squares R."/>
            <person name="Squares S."/>
            <person name="Stevens K."/>
            <person name="Taylor K."/>
            <person name="Taylor R.G."/>
            <person name="Tivey A."/>
            <person name="Walsh S.V."/>
            <person name="Warren T."/>
            <person name="Whitehead S."/>
            <person name="Woodward J.R."/>
            <person name="Volckaert G."/>
            <person name="Aert R."/>
            <person name="Robben J."/>
            <person name="Grymonprez B."/>
            <person name="Weltjens I."/>
            <person name="Vanstreels E."/>
            <person name="Rieger M."/>
            <person name="Schaefer M."/>
            <person name="Mueller-Auer S."/>
            <person name="Gabel C."/>
            <person name="Fuchs M."/>
            <person name="Duesterhoeft A."/>
            <person name="Fritzc C."/>
            <person name="Holzer E."/>
            <person name="Moestl D."/>
            <person name="Hilbert H."/>
            <person name="Borzym K."/>
            <person name="Langer I."/>
            <person name="Beck A."/>
            <person name="Lehrach H."/>
            <person name="Reinhardt R."/>
            <person name="Pohl T.M."/>
            <person name="Eger P."/>
            <person name="Zimmermann W."/>
            <person name="Wedler H."/>
            <person name="Wambutt R."/>
            <person name="Purnelle B."/>
            <person name="Goffeau A."/>
            <person name="Cadieu E."/>
            <person name="Dreano S."/>
            <person name="Gloux S."/>
            <person name="Lelaure V."/>
            <person name="Mottier S."/>
            <person name="Galibert F."/>
            <person name="Aves S.J."/>
            <person name="Xiang Z."/>
            <person name="Hunt C."/>
            <person name="Moore K."/>
            <person name="Hurst S.M."/>
            <person name="Lucas M."/>
            <person name="Rochet M."/>
            <person name="Gaillardin C."/>
            <person name="Tallada V.A."/>
            <person name="Garzon A."/>
            <person name="Thode G."/>
            <person name="Daga R.R."/>
            <person name="Cruzado L."/>
            <person name="Jimenez J."/>
            <person name="Sanchez M."/>
            <person name="del Rey F."/>
            <person name="Benito J."/>
            <person name="Dominguez A."/>
            <person name="Revuelta J.L."/>
            <person name="Moreno S."/>
            <person name="Armstrong J."/>
            <person name="Forsburg S.L."/>
            <person name="Cerutti L."/>
            <person name="Lowe T."/>
            <person name="McCombie W.R."/>
            <person name="Paulsen I."/>
            <person name="Potashkin J."/>
            <person name="Shpakovski G.V."/>
            <person name="Ussery D."/>
            <person name="Barrell B.G."/>
            <person name="Nurse P."/>
        </authorList>
    </citation>
    <scope>NUCLEOTIDE SEQUENCE [LARGE SCALE GENOMIC DNA]</scope>
    <source>
        <strain>972 / ATCC 24843</strain>
    </source>
</reference>
<organism>
    <name type="scientific">Schizosaccharomyces pombe (strain 972 / ATCC 24843)</name>
    <name type="common">Fission yeast</name>
    <dbReference type="NCBI Taxonomy" id="284812"/>
    <lineage>
        <taxon>Eukaryota</taxon>
        <taxon>Fungi</taxon>
        <taxon>Dikarya</taxon>
        <taxon>Ascomycota</taxon>
        <taxon>Taphrinomycotina</taxon>
        <taxon>Schizosaccharomycetes</taxon>
        <taxon>Schizosaccharomycetales</taxon>
        <taxon>Schizosaccharomycetaceae</taxon>
        <taxon>Schizosaccharomyces</taxon>
    </lineage>
</organism>
<gene>
    <name type="ORF">SPAPJ691.02</name>
</gene>
<keyword id="KW-0479">Metal-binding</keyword>
<keyword id="KW-1185">Reference proteome</keyword>
<keyword id="KW-0862">Zinc</keyword>